<protein>
    <recommendedName>
        <fullName evidence="1">Peptidase E</fullName>
        <ecNumber evidence="1">3.4.13.21</ecNumber>
    </recommendedName>
    <alternativeName>
        <fullName evidence="1">Alpha-aspartyl dipeptidase</fullName>
    </alternativeName>
    <alternativeName>
        <fullName evidence="1">Asp-specific dipeptidase</fullName>
    </alternativeName>
    <alternativeName>
        <fullName evidence="1">Dipeptidase E</fullName>
    </alternativeName>
</protein>
<comment type="function">
    <text evidence="1">Hydrolyzes dipeptides containing N-terminal aspartate residues. May play a role in allowing the cell to use peptide aspartate to spare carbon otherwise required for the synthesis of the aspartate family of amino acids.</text>
</comment>
<comment type="catalytic activity">
    <reaction evidence="1">
        <text>Dipeptidase E catalyzes the hydrolysis of dipeptides Asp-|-Xaa. It does not act on peptides with N-terminal Glu, Asn or Gln, nor does it cleave isoaspartyl peptides.</text>
        <dbReference type="EC" id="3.4.13.21"/>
    </reaction>
</comment>
<comment type="subcellular location">
    <subcellularLocation>
        <location evidence="1">Cytoplasm</location>
    </subcellularLocation>
</comment>
<comment type="similarity">
    <text evidence="1">Belongs to the peptidase S51 family.</text>
</comment>
<organism>
    <name type="scientific">Streptomyces coelicolor (strain ATCC BAA-471 / A3(2) / M145)</name>
    <dbReference type="NCBI Taxonomy" id="100226"/>
    <lineage>
        <taxon>Bacteria</taxon>
        <taxon>Bacillati</taxon>
        <taxon>Actinomycetota</taxon>
        <taxon>Actinomycetes</taxon>
        <taxon>Kitasatosporales</taxon>
        <taxon>Streptomycetaceae</taxon>
        <taxon>Streptomyces</taxon>
        <taxon>Streptomyces albidoflavus group</taxon>
    </lineage>
</organism>
<evidence type="ECO:0000255" key="1">
    <source>
        <dbReference type="HAMAP-Rule" id="MF_00510"/>
    </source>
</evidence>
<accession>Q93RZ5</accession>
<gene>
    <name evidence="1" type="primary">pepE</name>
    <name type="ordered locus">SCO0575</name>
    <name type="ORF">SC5G5.07</name>
</gene>
<sequence>MNLLLLSNSTQHGRGYLEHALDTVTGFLPAGARLAFVPYALADHDTYTARVRGALADAGIDVRGVHEGGDPLARLDEADAVFVGGGNSFRLLSALYRTGLREALVKAVRGGLPYMGASAGTNMAAPSLRTTNDMPIVEPPSFETLGLVPFQINPHYLDPDPGSTHKGETREERLREFLEENDVPVLGLREGSWLRVEGDRAVLGGERDARLFRRGTAPRELAVGSDLSELLDVRGEFDTGTRS</sequence>
<dbReference type="EC" id="3.4.13.21" evidence="1"/>
<dbReference type="EMBL" id="AL939106">
    <property type="protein sequence ID" value="CAC39637.1"/>
    <property type="molecule type" value="Genomic_DNA"/>
</dbReference>
<dbReference type="RefSeq" id="NP_624888.1">
    <property type="nucleotide sequence ID" value="NC_003888.3"/>
</dbReference>
<dbReference type="RefSeq" id="WP_011027213.1">
    <property type="nucleotide sequence ID" value="NZ_VNID01000004.1"/>
</dbReference>
<dbReference type="SMR" id="Q93RZ5"/>
<dbReference type="STRING" id="100226.gene:17758158"/>
<dbReference type="MEROPS" id="S51.002"/>
<dbReference type="PaxDb" id="100226-SCO0575"/>
<dbReference type="GeneID" id="91388508"/>
<dbReference type="KEGG" id="sco:SCO0575"/>
<dbReference type="PATRIC" id="fig|100226.15.peg.556"/>
<dbReference type="eggNOG" id="COG3340">
    <property type="taxonomic scope" value="Bacteria"/>
</dbReference>
<dbReference type="HOGENOM" id="CLU_071689_0_0_11"/>
<dbReference type="InParanoid" id="Q93RZ5"/>
<dbReference type="OrthoDB" id="3373764at2"/>
<dbReference type="PhylomeDB" id="Q93RZ5"/>
<dbReference type="Proteomes" id="UP000001973">
    <property type="component" value="Chromosome"/>
</dbReference>
<dbReference type="GO" id="GO:0005737">
    <property type="term" value="C:cytoplasm"/>
    <property type="evidence" value="ECO:0007669"/>
    <property type="project" value="UniProtKB-SubCell"/>
</dbReference>
<dbReference type="GO" id="GO:0016805">
    <property type="term" value="F:dipeptidase activity"/>
    <property type="evidence" value="ECO:0007669"/>
    <property type="project" value="UniProtKB-UniRule"/>
</dbReference>
<dbReference type="GO" id="GO:0008236">
    <property type="term" value="F:serine-type peptidase activity"/>
    <property type="evidence" value="ECO:0007669"/>
    <property type="project" value="UniProtKB-KW"/>
</dbReference>
<dbReference type="GO" id="GO:0006508">
    <property type="term" value="P:proteolysis"/>
    <property type="evidence" value="ECO:0007669"/>
    <property type="project" value="UniProtKB-UniRule"/>
</dbReference>
<dbReference type="CDD" id="cd03146">
    <property type="entry name" value="GAT1_Peptidase_E"/>
    <property type="match status" value="1"/>
</dbReference>
<dbReference type="FunFam" id="3.40.50.880:FF:000007">
    <property type="entry name" value="Peptidase E"/>
    <property type="match status" value="1"/>
</dbReference>
<dbReference type="Gene3D" id="3.40.50.880">
    <property type="match status" value="1"/>
</dbReference>
<dbReference type="HAMAP" id="MF_00510">
    <property type="entry name" value="Peptidase_E"/>
    <property type="match status" value="1"/>
</dbReference>
<dbReference type="InterPro" id="IPR029062">
    <property type="entry name" value="Class_I_gatase-like"/>
</dbReference>
<dbReference type="InterPro" id="IPR005320">
    <property type="entry name" value="Peptidase_S51"/>
</dbReference>
<dbReference type="InterPro" id="IPR023172">
    <property type="entry name" value="Peptidase_S51_dipeptidase-E"/>
</dbReference>
<dbReference type="NCBIfam" id="NF003642">
    <property type="entry name" value="PRK05282.1"/>
    <property type="match status" value="1"/>
</dbReference>
<dbReference type="PANTHER" id="PTHR20842:SF0">
    <property type="entry name" value="ALPHA-ASPARTYL DIPEPTIDASE"/>
    <property type="match status" value="1"/>
</dbReference>
<dbReference type="PANTHER" id="PTHR20842">
    <property type="entry name" value="PROTEASE S51 ALPHA-ASPARTYL DIPEPTIDASE"/>
    <property type="match status" value="1"/>
</dbReference>
<dbReference type="Pfam" id="PF03575">
    <property type="entry name" value="Peptidase_S51"/>
    <property type="match status" value="1"/>
</dbReference>
<dbReference type="SUPFAM" id="SSF52317">
    <property type="entry name" value="Class I glutamine amidotransferase-like"/>
    <property type="match status" value="1"/>
</dbReference>
<proteinExistence type="inferred from homology"/>
<feature type="chain" id="PRO_0000209964" description="Peptidase E">
    <location>
        <begin position="1"/>
        <end position="243"/>
    </location>
</feature>
<feature type="active site" description="Charge relay system" evidence="1">
    <location>
        <position position="118"/>
    </location>
</feature>
<feature type="active site" description="Charge relay system" evidence="1">
    <location>
        <position position="133"/>
    </location>
</feature>
<feature type="active site" description="Charge relay system" evidence="1">
    <location>
        <position position="155"/>
    </location>
</feature>
<reference key="1">
    <citation type="journal article" date="2002" name="Nature">
        <title>Complete genome sequence of the model actinomycete Streptomyces coelicolor A3(2).</title>
        <authorList>
            <person name="Bentley S.D."/>
            <person name="Chater K.F."/>
            <person name="Cerdeno-Tarraga A.-M."/>
            <person name="Challis G.L."/>
            <person name="Thomson N.R."/>
            <person name="James K.D."/>
            <person name="Harris D.E."/>
            <person name="Quail M.A."/>
            <person name="Kieser H."/>
            <person name="Harper D."/>
            <person name="Bateman A."/>
            <person name="Brown S."/>
            <person name="Chandra G."/>
            <person name="Chen C.W."/>
            <person name="Collins M."/>
            <person name="Cronin A."/>
            <person name="Fraser A."/>
            <person name="Goble A."/>
            <person name="Hidalgo J."/>
            <person name="Hornsby T."/>
            <person name="Howarth S."/>
            <person name="Huang C.-H."/>
            <person name="Kieser T."/>
            <person name="Larke L."/>
            <person name="Murphy L.D."/>
            <person name="Oliver K."/>
            <person name="O'Neil S."/>
            <person name="Rabbinowitsch E."/>
            <person name="Rajandream M.A."/>
            <person name="Rutherford K.M."/>
            <person name="Rutter S."/>
            <person name="Seeger K."/>
            <person name="Saunders D."/>
            <person name="Sharp S."/>
            <person name="Squares R."/>
            <person name="Squares S."/>
            <person name="Taylor K."/>
            <person name="Warren T."/>
            <person name="Wietzorrek A."/>
            <person name="Woodward J.R."/>
            <person name="Barrell B.G."/>
            <person name="Parkhill J."/>
            <person name="Hopwood D.A."/>
        </authorList>
    </citation>
    <scope>NUCLEOTIDE SEQUENCE [LARGE SCALE GENOMIC DNA]</scope>
    <source>
        <strain>ATCC BAA-471 / A3(2) / M145</strain>
    </source>
</reference>
<keyword id="KW-0963">Cytoplasm</keyword>
<keyword id="KW-0224">Dipeptidase</keyword>
<keyword id="KW-0378">Hydrolase</keyword>
<keyword id="KW-0645">Protease</keyword>
<keyword id="KW-1185">Reference proteome</keyword>
<keyword id="KW-0720">Serine protease</keyword>
<name>PEPE_STRCO</name>